<organism>
    <name type="scientific">Oryza sativa subsp. japonica</name>
    <name type="common">Rice</name>
    <dbReference type="NCBI Taxonomy" id="39947"/>
    <lineage>
        <taxon>Eukaryota</taxon>
        <taxon>Viridiplantae</taxon>
        <taxon>Streptophyta</taxon>
        <taxon>Embryophyta</taxon>
        <taxon>Tracheophyta</taxon>
        <taxon>Spermatophyta</taxon>
        <taxon>Magnoliopsida</taxon>
        <taxon>Liliopsida</taxon>
        <taxon>Poales</taxon>
        <taxon>Poaceae</taxon>
        <taxon>BOP clade</taxon>
        <taxon>Oryzoideae</taxon>
        <taxon>Oryzeae</taxon>
        <taxon>Oryzinae</taxon>
        <taxon>Oryza</taxon>
        <taxon>Oryza sativa</taxon>
    </lineage>
</organism>
<evidence type="ECO:0000250" key="1"/>
<evidence type="ECO:0000305" key="2"/>
<dbReference type="EC" id="2.7.1.100"/>
<dbReference type="EMBL" id="AL606619">
    <property type="protein sequence ID" value="CAE02820.1"/>
    <property type="molecule type" value="Genomic_DNA"/>
</dbReference>
<dbReference type="EMBL" id="AP014960">
    <property type="status" value="NOT_ANNOTATED_CDS"/>
    <property type="molecule type" value="Genomic_DNA"/>
</dbReference>
<dbReference type="EMBL" id="CM000141">
    <property type="protein sequence ID" value="EAZ32356.1"/>
    <property type="molecule type" value="Genomic_DNA"/>
</dbReference>
<dbReference type="SMR" id="Q7XR60"/>
<dbReference type="FunCoup" id="Q7XR60">
    <property type="interactions" value="978"/>
</dbReference>
<dbReference type="STRING" id="39947.Q7XR60"/>
<dbReference type="PaxDb" id="39947-Q7XR60"/>
<dbReference type="GeneID" id="107276080"/>
<dbReference type="KEGG" id="osa:107276080"/>
<dbReference type="eggNOG" id="ENOG502QVM3">
    <property type="taxonomic scope" value="Eukaryota"/>
</dbReference>
<dbReference type="HOGENOM" id="CLU_033681_0_0_1"/>
<dbReference type="InParanoid" id="Q7XR60"/>
<dbReference type="OrthoDB" id="2461at2759"/>
<dbReference type="PlantReactome" id="R-OSA-1119624">
    <property type="pathway name" value="Methionine salvage pathway"/>
</dbReference>
<dbReference type="UniPathway" id="UPA00904">
    <property type="reaction ID" value="UER00872"/>
</dbReference>
<dbReference type="Proteomes" id="UP000000763">
    <property type="component" value="Chromosome 4"/>
</dbReference>
<dbReference type="Proteomes" id="UP000007752">
    <property type="component" value="Chromosome 4"/>
</dbReference>
<dbReference type="Proteomes" id="UP000059680">
    <property type="component" value="Chromosome 4"/>
</dbReference>
<dbReference type="GO" id="GO:0005524">
    <property type="term" value="F:ATP binding"/>
    <property type="evidence" value="ECO:0007669"/>
    <property type="project" value="UniProtKB-KW"/>
</dbReference>
<dbReference type="GO" id="GO:0046522">
    <property type="term" value="F:S-methyl-5-thioribose kinase activity"/>
    <property type="evidence" value="ECO:0007669"/>
    <property type="project" value="UniProtKB-EC"/>
</dbReference>
<dbReference type="GO" id="GO:0019509">
    <property type="term" value="P:L-methionine salvage from methylthioadenosine"/>
    <property type="evidence" value="ECO:0007669"/>
    <property type="project" value="UniProtKB-UniPathway"/>
</dbReference>
<dbReference type="FunFam" id="3.30.200.20:FF:000571">
    <property type="entry name" value="Methylthioribose kinase"/>
    <property type="match status" value="1"/>
</dbReference>
<dbReference type="FunFam" id="3.90.1200.10:FF:000013">
    <property type="entry name" value="Methylthioribose kinase"/>
    <property type="match status" value="1"/>
</dbReference>
<dbReference type="Gene3D" id="3.90.1200.10">
    <property type="match status" value="1"/>
</dbReference>
<dbReference type="Gene3D" id="3.30.200.20">
    <property type="entry name" value="Phosphorylase Kinase, domain 1"/>
    <property type="match status" value="1"/>
</dbReference>
<dbReference type="InterPro" id="IPR002575">
    <property type="entry name" value="Aminoglycoside_PTrfase"/>
</dbReference>
<dbReference type="InterPro" id="IPR011009">
    <property type="entry name" value="Kinase-like_dom_sf"/>
</dbReference>
<dbReference type="InterPro" id="IPR009212">
    <property type="entry name" value="Methylthioribose_kinase"/>
</dbReference>
<dbReference type="NCBIfam" id="TIGR01767">
    <property type="entry name" value="MTRK"/>
    <property type="match status" value="1"/>
</dbReference>
<dbReference type="PANTHER" id="PTHR34273">
    <property type="entry name" value="METHYLTHIORIBOSE KINASE"/>
    <property type="match status" value="1"/>
</dbReference>
<dbReference type="PANTHER" id="PTHR34273:SF2">
    <property type="entry name" value="METHYLTHIORIBOSE KINASE"/>
    <property type="match status" value="1"/>
</dbReference>
<dbReference type="Pfam" id="PF01636">
    <property type="entry name" value="APH"/>
    <property type="match status" value="1"/>
</dbReference>
<dbReference type="PIRSF" id="PIRSF031134">
    <property type="entry name" value="MTRK"/>
    <property type="match status" value="1"/>
</dbReference>
<dbReference type="SUPFAM" id="SSF56112">
    <property type="entry name" value="Protein kinase-like (PK-like)"/>
    <property type="match status" value="1"/>
</dbReference>
<reference key="1">
    <citation type="journal article" date="2002" name="Nature">
        <title>Sequence and analysis of rice chromosome 4.</title>
        <authorList>
            <person name="Feng Q."/>
            <person name="Zhang Y."/>
            <person name="Hao P."/>
            <person name="Wang S."/>
            <person name="Fu G."/>
            <person name="Huang Y."/>
            <person name="Li Y."/>
            <person name="Zhu J."/>
            <person name="Liu Y."/>
            <person name="Hu X."/>
            <person name="Jia P."/>
            <person name="Zhang Y."/>
            <person name="Zhao Q."/>
            <person name="Ying K."/>
            <person name="Yu S."/>
            <person name="Tang Y."/>
            <person name="Weng Q."/>
            <person name="Zhang L."/>
            <person name="Lu Y."/>
            <person name="Mu J."/>
            <person name="Lu Y."/>
            <person name="Zhang L.S."/>
            <person name="Yu Z."/>
            <person name="Fan D."/>
            <person name="Liu X."/>
            <person name="Lu T."/>
            <person name="Li C."/>
            <person name="Wu Y."/>
            <person name="Sun T."/>
            <person name="Lei H."/>
            <person name="Li T."/>
            <person name="Hu H."/>
            <person name="Guan J."/>
            <person name="Wu M."/>
            <person name="Zhang R."/>
            <person name="Zhou B."/>
            <person name="Chen Z."/>
            <person name="Chen L."/>
            <person name="Jin Z."/>
            <person name="Wang R."/>
            <person name="Yin H."/>
            <person name="Cai Z."/>
            <person name="Ren S."/>
            <person name="Lv G."/>
            <person name="Gu W."/>
            <person name="Zhu G."/>
            <person name="Tu Y."/>
            <person name="Jia J."/>
            <person name="Zhang Y."/>
            <person name="Chen J."/>
            <person name="Kang H."/>
            <person name="Chen X."/>
            <person name="Shao C."/>
            <person name="Sun Y."/>
            <person name="Hu Q."/>
            <person name="Zhang X."/>
            <person name="Zhang W."/>
            <person name="Wang L."/>
            <person name="Ding C."/>
            <person name="Sheng H."/>
            <person name="Gu J."/>
            <person name="Chen S."/>
            <person name="Ni L."/>
            <person name="Zhu F."/>
            <person name="Chen W."/>
            <person name="Lan L."/>
            <person name="Lai Y."/>
            <person name="Cheng Z."/>
            <person name="Gu M."/>
            <person name="Jiang J."/>
            <person name="Li J."/>
            <person name="Hong G."/>
            <person name="Xue Y."/>
            <person name="Han B."/>
        </authorList>
    </citation>
    <scope>NUCLEOTIDE SEQUENCE [LARGE SCALE GENOMIC DNA]</scope>
    <source>
        <strain>cv. Nipponbare</strain>
    </source>
</reference>
<reference key="2">
    <citation type="journal article" date="2005" name="Nature">
        <title>The map-based sequence of the rice genome.</title>
        <authorList>
            <consortium name="International rice genome sequencing project (IRGSP)"/>
        </authorList>
    </citation>
    <scope>NUCLEOTIDE SEQUENCE [LARGE SCALE GENOMIC DNA]</scope>
    <source>
        <strain>cv. Nipponbare</strain>
    </source>
</reference>
<reference key="3">
    <citation type="journal article" date="2013" name="Rice">
        <title>Improvement of the Oryza sativa Nipponbare reference genome using next generation sequence and optical map data.</title>
        <authorList>
            <person name="Kawahara Y."/>
            <person name="de la Bastide M."/>
            <person name="Hamilton J.P."/>
            <person name="Kanamori H."/>
            <person name="McCombie W.R."/>
            <person name="Ouyang S."/>
            <person name="Schwartz D.C."/>
            <person name="Tanaka T."/>
            <person name="Wu J."/>
            <person name="Zhou S."/>
            <person name="Childs K.L."/>
            <person name="Davidson R.M."/>
            <person name="Lin H."/>
            <person name="Quesada-Ocampo L."/>
            <person name="Vaillancourt B."/>
            <person name="Sakai H."/>
            <person name="Lee S.S."/>
            <person name="Kim J."/>
            <person name="Numa H."/>
            <person name="Itoh T."/>
            <person name="Buell C.R."/>
            <person name="Matsumoto T."/>
        </authorList>
    </citation>
    <scope>GENOME REANNOTATION</scope>
    <source>
        <strain>cv. Nipponbare</strain>
    </source>
</reference>
<reference key="4">
    <citation type="journal article" date="2005" name="PLoS Biol.">
        <title>The genomes of Oryza sativa: a history of duplications.</title>
        <authorList>
            <person name="Yu J."/>
            <person name="Wang J."/>
            <person name="Lin W."/>
            <person name="Li S."/>
            <person name="Li H."/>
            <person name="Zhou J."/>
            <person name="Ni P."/>
            <person name="Dong W."/>
            <person name="Hu S."/>
            <person name="Zeng C."/>
            <person name="Zhang J."/>
            <person name="Zhang Y."/>
            <person name="Li R."/>
            <person name="Xu Z."/>
            <person name="Li S."/>
            <person name="Li X."/>
            <person name="Zheng H."/>
            <person name="Cong L."/>
            <person name="Lin L."/>
            <person name="Yin J."/>
            <person name="Geng J."/>
            <person name="Li G."/>
            <person name="Shi J."/>
            <person name="Liu J."/>
            <person name="Lv H."/>
            <person name="Li J."/>
            <person name="Wang J."/>
            <person name="Deng Y."/>
            <person name="Ran L."/>
            <person name="Shi X."/>
            <person name="Wang X."/>
            <person name="Wu Q."/>
            <person name="Li C."/>
            <person name="Ren X."/>
            <person name="Wang J."/>
            <person name="Wang X."/>
            <person name="Li D."/>
            <person name="Liu D."/>
            <person name="Zhang X."/>
            <person name="Ji Z."/>
            <person name="Zhao W."/>
            <person name="Sun Y."/>
            <person name="Zhang Z."/>
            <person name="Bao J."/>
            <person name="Han Y."/>
            <person name="Dong L."/>
            <person name="Ji J."/>
            <person name="Chen P."/>
            <person name="Wu S."/>
            <person name="Liu J."/>
            <person name="Xiao Y."/>
            <person name="Bu D."/>
            <person name="Tan J."/>
            <person name="Yang L."/>
            <person name="Ye C."/>
            <person name="Zhang J."/>
            <person name="Xu J."/>
            <person name="Zhou Y."/>
            <person name="Yu Y."/>
            <person name="Zhang B."/>
            <person name="Zhuang S."/>
            <person name="Wei H."/>
            <person name="Liu B."/>
            <person name="Lei M."/>
            <person name="Yu H."/>
            <person name="Li Y."/>
            <person name="Xu H."/>
            <person name="Wei S."/>
            <person name="He X."/>
            <person name="Fang L."/>
            <person name="Zhang Z."/>
            <person name="Zhang Y."/>
            <person name="Huang X."/>
            <person name="Su Z."/>
            <person name="Tong W."/>
            <person name="Li J."/>
            <person name="Tong Z."/>
            <person name="Li S."/>
            <person name="Ye J."/>
            <person name="Wang L."/>
            <person name="Fang L."/>
            <person name="Lei T."/>
            <person name="Chen C.-S."/>
            <person name="Chen H.-C."/>
            <person name="Xu Z."/>
            <person name="Li H."/>
            <person name="Huang H."/>
            <person name="Zhang F."/>
            <person name="Xu H."/>
            <person name="Li N."/>
            <person name="Zhao C."/>
            <person name="Li S."/>
            <person name="Dong L."/>
            <person name="Huang Y."/>
            <person name="Li L."/>
            <person name="Xi Y."/>
            <person name="Qi Q."/>
            <person name="Li W."/>
            <person name="Zhang B."/>
            <person name="Hu W."/>
            <person name="Zhang Y."/>
            <person name="Tian X."/>
            <person name="Jiao Y."/>
            <person name="Liang X."/>
            <person name="Jin J."/>
            <person name="Gao L."/>
            <person name="Zheng W."/>
            <person name="Hao B."/>
            <person name="Liu S.-M."/>
            <person name="Wang W."/>
            <person name="Yuan L."/>
            <person name="Cao M."/>
            <person name="McDermott J."/>
            <person name="Samudrala R."/>
            <person name="Wang J."/>
            <person name="Wong G.K.-S."/>
            <person name="Yang H."/>
        </authorList>
    </citation>
    <scope>NUCLEOTIDE SEQUENCE [LARGE SCALE GENOMIC DNA]</scope>
    <source>
        <strain>cv. Nipponbare</strain>
    </source>
</reference>
<gene>
    <name type="primary">MTK2</name>
    <name type="ordered locus">Os04g0669900</name>
    <name type="ordered locus">LOC_Os04g57410</name>
    <name type="ORF">OsJ_16566</name>
    <name type="ORF">OSJNBa0043A12.25</name>
</gene>
<proteinExistence type="evidence at transcript level"/>
<accession>Q7XR60</accession>
<feature type="chain" id="PRO_0000401365" description="Methylthioribose kinase 2">
    <location>
        <begin position="1"/>
        <end position="427"/>
    </location>
</feature>
<feature type="binding site" evidence="1">
    <location>
        <begin position="49"/>
        <end position="53"/>
    </location>
    <ligand>
        <name>ATP</name>
        <dbReference type="ChEBI" id="CHEBI:30616"/>
    </ligand>
</feature>
<feature type="binding site" evidence="1">
    <location>
        <position position="51"/>
    </location>
    <ligand>
        <name>substrate</name>
    </ligand>
</feature>
<feature type="binding site" evidence="1">
    <location>
        <position position="68"/>
    </location>
    <ligand>
        <name>ATP</name>
        <dbReference type="ChEBI" id="CHEBI:30616"/>
    </ligand>
</feature>
<feature type="binding site" evidence="1">
    <location>
        <begin position="122"/>
        <end position="124"/>
    </location>
    <ligand>
        <name>ATP</name>
        <dbReference type="ChEBI" id="CHEBI:30616"/>
    </ligand>
</feature>
<feature type="binding site" evidence="1">
    <location>
        <position position="243"/>
    </location>
    <ligand>
        <name>substrate</name>
    </ligand>
</feature>
<feature type="binding site" evidence="1">
    <location>
        <begin position="260"/>
        <end position="262"/>
    </location>
    <ligand>
        <name>ATP</name>
        <dbReference type="ChEBI" id="CHEBI:30616"/>
    </ligand>
</feature>
<feature type="binding site" evidence="1">
    <location>
        <position position="370"/>
    </location>
    <ligand>
        <name>substrate</name>
    </ligand>
</feature>
<comment type="function">
    <text evidence="1">Catalyzes the phosphorylation of methylthioribose into methylthioribose-1-phosphate.</text>
</comment>
<comment type="catalytic activity">
    <reaction>
        <text>5-(methylsulfanyl)-D-ribose + ATP = 5-(methylsulfanyl)-alpha-D-ribose 1-phosphate + ADP + H(+)</text>
        <dbReference type="Rhea" id="RHEA:22312"/>
        <dbReference type="ChEBI" id="CHEBI:15378"/>
        <dbReference type="ChEBI" id="CHEBI:30616"/>
        <dbReference type="ChEBI" id="CHEBI:58533"/>
        <dbReference type="ChEBI" id="CHEBI:78440"/>
        <dbReference type="ChEBI" id="CHEBI:456216"/>
        <dbReference type="EC" id="2.7.1.100"/>
    </reaction>
</comment>
<comment type="pathway">
    <text>Amino-acid biosynthesis; L-methionine biosynthesis via salvage pathway; S-methyl-5-thio-alpha-D-ribose 1-phosphate from S-methyl-5'-thioadenosine (hydrolase route): step 2/2.</text>
</comment>
<comment type="subunit">
    <text evidence="1">Homodimer.</text>
</comment>
<comment type="similarity">
    <text evidence="2">Belongs to the methylthioribose kinase family.</text>
</comment>
<keyword id="KW-0028">Amino-acid biosynthesis</keyword>
<keyword id="KW-0067">ATP-binding</keyword>
<keyword id="KW-0418">Kinase</keyword>
<keyword id="KW-0486">Methionine biosynthesis</keyword>
<keyword id="KW-0547">Nucleotide-binding</keyword>
<keyword id="KW-1185">Reference proteome</keyword>
<keyword id="KW-0808">Transferase</keyword>
<protein>
    <recommendedName>
        <fullName>Methylthioribose kinase 2</fullName>
        <shortName>MTR kinase 2</shortName>
        <shortName>OsMTK2</shortName>
        <ecNumber>2.7.1.100</ecNumber>
    </recommendedName>
</protein>
<sequence>MAAAAAEQQQQGFRPLDEASLVAYIKATPALAARLGGRLDALTIKEVGDGNLNFVYIVLSDAGSLVIKQALPYIRLVGDSWPMSRERAYFEASALQKHRALCPDHVPEVYHFDRAMSLIGMRYIEPPHIILRKGLVAGVEYPLLAEHMADYMAKTLFFTSLLYNSTTDHKKGVAQYCDNVEMSRLTEQVVFSDPYRVAKYNRCTSPFLDNDAAAVREDAELKLEIAELKSMFIERAQAFLHGDLHTSSIMVTPDSTQVIDPEFAFYGPMGYDIGAFLGNLILAYFSQDGHADQANDRKAYKKWILKTIEDSWNFFHKKFVELWNKHKDGNGEAYLPPIYNSSELLSLVQKKYMTSLFHDSLGFGSAKMIRRIVGIAHVEDFESIEDASKRASCERRALNCAKAILKGRRQFESIEQVIVHVQSFDRD</sequence>
<name>MTK2_ORYSJ</name>